<organism>
    <name type="scientific">Beutenbergia cavernae (strain ATCC BAA-8 / DSM 12333 / CCUG 43141 / JCM 11478 / NBRC 16432 / NCIMB 13614 / HKI 0122)</name>
    <dbReference type="NCBI Taxonomy" id="471853"/>
    <lineage>
        <taxon>Bacteria</taxon>
        <taxon>Bacillati</taxon>
        <taxon>Actinomycetota</taxon>
        <taxon>Actinomycetes</taxon>
        <taxon>Micrococcales</taxon>
        <taxon>Beutenbergiaceae</taxon>
        <taxon>Beutenbergia</taxon>
    </lineage>
</organism>
<dbReference type="EC" id="3.6.1.31" evidence="1"/>
<dbReference type="EMBL" id="CP001618">
    <property type="protein sequence ID" value="ACQ80308.1"/>
    <property type="molecule type" value="Genomic_DNA"/>
</dbReference>
<dbReference type="RefSeq" id="WP_015882548.1">
    <property type="nucleotide sequence ID" value="NC_012669.1"/>
</dbReference>
<dbReference type="SMR" id="C5C6A2"/>
<dbReference type="STRING" id="471853.Bcav_2053"/>
<dbReference type="KEGG" id="bcv:Bcav_2053"/>
<dbReference type="eggNOG" id="COG0140">
    <property type="taxonomic scope" value="Bacteria"/>
</dbReference>
<dbReference type="HOGENOM" id="CLU_123337_2_1_11"/>
<dbReference type="OrthoDB" id="3212875at2"/>
<dbReference type="UniPathway" id="UPA00031">
    <property type="reaction ID" value="UER00007"/>
</dbReference>
<dbReference type="Proteomes" id="UP000007962">
    <property type="component" value="Chromosome"/>
</dbReference>
<dbReference type="GO" id="GO:0005737">
    <property type="term" value="C:cytoplasm"/>
    <property type="evidence" value="ECO:0007669"/>
    <property type="project" value="UniProtKB-SubCell"/>
</dbReference>
<dbReference type="GO" id="GO:0005524">
    <property type="term" value="F:ATP binding"/>
    <property type="evidence" value="ECO:0007669"/>
    <property type="project" value="UniProtKB-KW"/>
</dbReference>
<dbReference type="GO" id="GO:0004636">
    <property type="term" value="F:phosphoribosyl-ATP diphosphatase activity"/>
    <property type="evidence" value="ECO:0007669"/>
    <property type="project" value="UniProtKB-UniRule"/>
</dbReference>
<dbReference type="GO" id="GO:0000105">
    <property type="term" value="P:L-histidine biosynthetic process"/>
    <property type="evidence" value="ECO:0007669"/>
    <property type="project" value="UniProtKB-UniRule"/>
</dbReference>
<dbReference type="CDD" id="cd11547">
    <property type="entry name" value="NTP-PPase_HisE"/>
    <property type="match status" value="1"/>
</dbReference>
<dbReference type="Gene3D" id="1.10.287.1080">
    <property type="entry name" value="MazG-like"/>
    <property type="match status" value="1"/>
</dbReference>
<dbReference type="HAMAP" id="MF_01020">
    <property type="entry name" value="HisE"/>
    <property type="match status" value="1"/>
</dbReference>
<dbReference type="InterPro" id="IPR008179">
    <property type="entry name" value="HisE"/>
</dbReference>
<dbReference type="InterPro" id="IPR021130">
    <property type="entry name" value="PRib-ATP_PPHydrolase-like"/>
</dbReference>
<dbReference type="NCBIfam" id="TIGR03188">
    <property type="entry name" value="histidine_hisI"/>
    <property type="match status" value="1"/>
</dbReference>
<dbReference type="NCBIfam" id="NF001610">
    <property type="entry name" value="PRK00400.1-1"/>
    <property type="match status" value="1"/>
</dbReference>
<dbReference type="PANTHER" id="PTHR42945">
    <property type="entry name" value="HISTIDINE BIOSYNTHESIS BIFUNCTIONAL PROTEIN"/>
    <property type="match status" value="1"/>
</dbReference>
<dbReference type="PANTHER" id="PTHR42945:SF1">
    <property type="entry name" value="HISTIDINE BIOSYNTHESIS BIFUNCTIONAL PROTEIN HIS7"/>
    <property type="match status" value="1"/>
</dbReference>
<dbReference type="Pfam" id="PF01503">
    <property type="entry name" value="PRA-PH"/>
    <property type="match status" value="1"/>
</dbReference>
<dbReference type="SUPFAM" id="SSF101386">
    <property type="entry name" value="all-alpha NTP pyrophosphatases"/>
    <property type="match status" value="1"/>
</dbReference>
<evidence type="ECO:0000255" key="1">
    <source>
        <dbReference type="HAMAP-Rule" id="MF_01020"/>
    </source>
</evidence>
<sequence length="87" mass="9667">MKTFDELYAELTEKARTRPAGSRTVAELDAGVHAIGKKVLEEAAEAWMAAEHESDEATAEEISQLLYHAQVLMIARGIDLQAVYRHL</sequence>
<proteinExistence type="inferred from homology"/>
<name>HIS2_BEUC1</name>
<reference key="1">
    <citation type="journal article" date="2009" name="Stand. Genomic Sci.">
        <title>Complete genome sequence of Beutenbergia cavernae type strain (HKI 0122).</title>
        <authorList>
            <person name="Land M."/>
            <person name="Pukall R."/>
            <person name="Abt B."/>
            <person name="Goker M."/>
            <person name="Rohde M."/>
            <person name="Glavina Del Rio T."/>
            <person name="Tice H."/>
            <person name="Copeland A."/>
            <person name="Cheng J.F."/>
            <person name="Lucas S."/>
            <person name="Chen F."/>
            <person name="Nolan M."/>
            <person name="Bruce D."/>
            <person name="Goodwin L."/>
            <person name="Pitluck S."/>
            <person name="Ivanova N."/>
            <person name="Mavromatis K."/>
            <person name="Ovchinnikova G."/>
            <person name="Pati A."/>
            <person name="Chen A."/>
            <person name="Palaniappan K."/>
            <person name="Hauser L."/>
            <person name="Chang Y.J."/>
            <person name="Jefferies C.C."/>
            <person name="Saunders E."/>
            <person name="Brettin T."/>
            <person name="Detter J.C."/>
            <person name="Han C."/>
            <person name="Chain P."/>
            <person name="Bristow J."/>
            <person name="Eisen J.A."/>
            <person name="Markowitz V."/>
            <person name="Hugenholtz P."/>
            <person name="Kyrpides N.C."/>
            <person name="Klenk H.P."/>
            <person name="Lapidus A."/>
        </authorList>
    </citation>
    <scope>NUCLEOTIDE SEQUENCE [LARGE SCALE GENOMIC DNA]</scope>
    <source>
        <strain>ATCC BAA-8 / DSM 12333 / CCUG 43141 / JCM 11478 / NBRC 16432 / NCIMB 13614 / HKI 0122</strain>
    </source>
</reference>
<protein>
    <recommendedName>
        <fullName evidence="1">Phosphoribosyl-ATP pyrophosphatase</fullName>
        <shortName evidence="1">PRA-PH</shortName>
        <ecNumber evidence="1">3.6.1.31</ecNumber>
    </recommendedName>
</protein>
<keyword id="KW-0028">Amino-acid biosynthesis</keyword>
<keyword id="KW-0067">ATP-binding</keyword>
<keyword id="KW-0963">Cytoplasm</keyword>
<keyword id="KW-0368">Histidine biosynthesis</keyword>
<keyword id="KW-0378">Hydrolase</keyword>
<keyword id="KW-0547">Nucleotide-binding</keyword>
<keyword id="KW-1185">Reference proteome</keyword>
<gene>
    <name evidence="1" type="primary">hisE</name>
    <name type="ordered locus">Bcav_2053</name>
</gene>
<comment type="catalytic activity">
    <reaction evidence="1">
        <text>1-(5-phospho-beta-D-ribosyl)-ATP + H2O = 1-(5-phospho-beta-D-ribosyl)-5'-AMP + diphosphate + H(+)</text>
        <dbReference type="Rhea" id="RHEA:22828"/>
        <dbReference type="ChEBI" id="CHEBI:15377"/>
        <dbReference type="ChEBI" id="CHEBI:15378"/>
        <dbReference type="ChEBI" id="CHEBI:33019"/>
        <dbReference type="ChEBI" id="CHEBI:59457"/>
        <dbReference type="ChEBI" id="CHEBI:73183"/>
        <dbReference type="EC" id="3.6.1.31"/>
    </reaction>
</comment>
<comment type="pathway">
    <text evidence="1">Amino-acid biosynthesis; L-histidine biosynthesis; L-histidine from 5-phospho-alpha-D-ribose 1-diphosphate: step 2/9.</text>
</comment>
<comment type="subcellular location">
    <subcellularLocation>
        <location evidence="1">Cytoplasm</location>
    </subcellularLocation>
</comment>
<comment type="similarity">
    <text evidence="1">Belongs to the PRA-PH family.</text>
</comment>
<accession>C5C6A2</accession>
<feature type="chain" id="PRO_1000213283" description="Phosphoribosyl-ATP pyrophosphatase">
    <location>
        <begin position="1"/>
        <end position="87"/>
    </location>
</feature>